<gene>
    <name evidence="1" type="primary">rps2</name>
    <name type="ordered locus">Mbur_2393</name>
</gene>
<accession>Q12TI2</accession>
<sequence length="214" mass="23615">MENTDQNIEITAETSAAAENTESTSLVPIDEYLAAGVHIGTQQKTQNMMKFVYRVRTDGLYVLDIQSTDERIRSIAHFLSMYDPSRILVVSARQYGQYPATMFSKSVGAVSKVGRFIPGSLTNPVQEGFFEPDVVIVTDPAGDAQVIREAVNVGIPVVALCDTNNMTSNVDLVIPTNNKGRKALSLVYWLLAREIANERDIPFNYEASEFETGL</sequence>
<proteinExistence type="inferred from homology"/>
<feature type="chain" id="PRO_0000352060" description="Small ribosomal subunit protein uS2">
    <location>
        <begin position="1"/>
        <end position="214"/>
    </location>
</feature>
<reference key="1">
    <citation type="journal article" date="2009" name="ISME J.">
        <title>The genome sequence of the psychrophilic archaeon, Methanococcoides burtonii: the role of genome evolution in cold adaptation.</title>
        <authorList>
            <person name="Allen M.A."/>
            <person name="Lauro F.M."/>
            <person name="Williams T.J."/>
            <person name="Burg D."/>
            <person name="Siddiqui K.S."/>
            <person name="De Francisci D."/>
            <person name="Chong K.W."/>
            <person name="Pilak O."/>
            <person name="Chew H.H."/>
            <person name="De Maere M.Z."/>
            <person name="Ting L."/>
            <person name="Katrib M."/>
            <person name="Ng C."/>
            <person name="Sowers K.R."/>
            <person name="Galperin M.Y."/>
            <person name="Anderson I.J."/>
            <person name="Ivanova N."/>
            <person name="Dalin E."/>
            <person name="Martinez M."/>
            <person name="Lapidus A."/>
            <person name="Hauser L."/>
            <person name="Land M."/>
            <person name="Thomas T."/>
            <person name="Cavicchioli R."/>
        </authorList>
    </citation>
    <scope>NUCLEOTIDE SEQUENCE [LARGE SCALE GENOMIC DNA]</scope>
    <source>
        <strain>DSM 6242 / NBRC 107633 / OCM 468 / ACE-M</strain>
    </source>
</reference>
<evidence type="ECO:0000255" key="1">
    <source>
        <dbReference type="HAMAP-Rule" id="MF_00291"/>
    </source>
</evidence>
<evidence type="ECO:0000305" key="2"/>
<organism>
    <name type="scientific">Methanococcoides burtonii (strain DSM 6242 / NBRC 107633 / OCM 468 / ACE-M)</name>
    <dbReference type="NCBI Taxonomy" id="259564"/>
    <lineage>
        <taxon>Archaea</taxon>
        <taxon>Methanobacteriati</taxon>
        <taxon>Methanobacteriota</taxon>
        <taxon>Stenosarchaea group</taxon>
        <taxon>Methanomicrobia</taxon>
        <taxon>Methanosarcinales</taxon>
        <taxon>Methanosarcinaceae</taxon>
        <taxon>Methanococcoides</taxon>
    </lineage>
</organism>
<protein>
    <recommendedName>
        <fullName evidence="1">Small ribosomal subunit protein uS2</fullName>
    </recommendedName>
    <alternativeName>
        <fullName evidence="2">30S ribosomal protein S2</fullName>
    </alternativeName>
</protein>
<comment type="similarity">
    <text evidence="1">Belongs to the universal ribosomal protein uS2 family.</text>
</comment>
<name>RS2_METBU</name>
<dbReference type="EMBL" id="CP000300">
    <property type="protein sequence ID" value="ABE53244.1"/>
    <property type="molecule type" value="Genomic_DNA"/>
</dbReference>
<dbReference type="RefSeq" id="WP_011500379.1">
    <property type="nucleotide sequence ID" value="NC_007955.1"/>
</dbReference>
<dbReference type="SMR" id="Q12TI2"/>
<dbReference type="STRING" id="259564.Mbur_2393"/>
<dbReference type="GeneID" id="3998981"/>
<dbReference type="KEGG" id="mbu:Mbur_2393"/>
<dbReference type="HOGENOM" id="CLU_058171_3_0_2"/>
<dbReference type="OrthoDB" id="371797at2157"/>
<dbReference type="Proteomes" id="UP000001979">
    <property type="component" value="Chromosome"/>
</dbReference>
<dbReference type="GO" id="GO:0015935">
    <property type="term" value="C:small ribosomal subunit"/>
    <property type="evidence" value="ECO:0007669"/>
    <property type="project" value="InterPro"/>
</dbReference>
<dbReference type="GO" id="GO:0003735">
    <property type="term" value="F:structural constituent of ribosome"/>
    <property type="evidence" value="ECO:0007669"/>
    <property type="project" value="InterPro"/>
</dbReference>
<dbReference type="GO" id="GO:0006412">
    <property type="term" value="P:translation"/>
    <property type="evidence" value="ECO:0007669"/>
    <property type="project" value="UniProtKB-UniRule"/>
</dbReference>
<dbReference type="CDD" id="cd01425">
    <property type="entry name" value="RPS2"/>
    <property type="match status" value="1"/>
</dbReference>
<dbReference type="FunFam" id="3.40.50.10490:FF:000030">
    <property type="entry name" value="30S ribosomal protein S2"/>
    <property type="match status" value="1"/>
</dbReference>
<dbReference type="Gene3D" id="3.40.50.10490">
    <property type="entry name" value="Glucose-6-phosphate isomerase like protein, domain 1"/>
    <property type="match status" value="1"/>
</dbReference>
<dbReference type="HAMAP" id="MF_00291_A">
    <property type="entry name" value="Ribosomal_uS2_A"/>
    <property type="match status" value="1"/>
</dbReference>
<dbReference type="InterPro" id="IPR001865">
    <property type="entry name" value="Ribosomal_uS2"/>
</dbReference>
<dbReference type="InterPro" id="IPR023454">
    <property type="entry name" value="Ribosomal_uS2_arc"/>
</dbReference>
<dbReference type="InterPro" id="IPR018130">
    <property type="entry name" value="Ribosomal_uS2_CS"/>
</dbReference>
<dbReference type="InterPro" id="IPR005707">
    <property type="entry name" value="Ribosomal_uS2_euk/arc"/>
</dbReference>
<dbReference type="InterPro" id="IPR023591">
    <property type="entry name" value="Ribosomal_uS2_flav_dom_sf"/>
</dbReference>
<dbReference type="NCBIfam" id="TIGR01012">
    <property type="entry name" value="uS2_euk_arch"/>
    <property type="match status" value="1"/>
</dbReference>
<dbReference type="PANTHER" id="PTHR11489">
    <property type="entry name" value="40S RIBOSOMAL PROTEIN SA"/>
    <property type="match status" value="1"/>
</dbReference>
<dbReference type="Pfam" id="PF00318">
    <property type="entry name" value="Ribosomal_S2"/>
    <property type="match status" value="2"/>
</dbReference>
<dbReference type="PRINTS" id="PR00395">
    <property type="entry name" value="RIBOSOMALS2"/>
</dbReference>
<dbReference type="SUPFAM" id="SSF52313">
    <property type="entry name" value="Ribosomal protein S2"/>
    <property type="match status" value="1"/>
</dbReference>
<dbReference type="PROSITE" id="PS00962">
    <property type="entry name" value="RIBOSOMAL_S2_1"/>
    <property type="match status" value="1"/>
</dbReference>
<dbReference type="PROSITE" id="PS00963">
    <property type="entry name" value="RIBOSOMAL_S2_2"/>
    <property type="match status" value="1"/>
</dbReference>
<keyword id="KW-0687">Ribonucleoprotein</keyword>
<keyword id="KW-0689">Ribosomal protein</keyword>